<protein>
    <recommendedName>
        <fullName>Translation initiation factor IF-1, chloroplastic</fullName>
    </recommendedName>
</protein>
<accession>Q94KR7</accession>
<keyword id="KW-0150">Chloroplast</keyword>
<keyword id="KW-0396">Initiation factor</keyword>
<keyword id="KW-0934">Plastid</keyword>
<keyword id="KW-0648">Protein biosynthesis</keyword>
<keyword id="KW-1185">Reference proteome</keyword>
<keyword id="KW-0809">Transit peptide</keyword>
<proteinExistence type="evidence at transcript level"/>
<name>IF1C_SOYBN</name>
<feature type="transit peptide" description="Chloroplast" evidence="2">
    <location>
        <begin position="1"/>
        <end position="53"/>
    </location>
</feature>
<feature type="chain" id="PRO_0000226957" description="Translation initiation factor IF-1, chloroplastic">
    <location>
        <begin position="54"/>
        <end position="138"/>
    </location>
</feature>
<feature type="domain" description="S1-like">
    <location>
        <begin position="58"/>
        <end position="133"/>
    </location>
</feature>
<sequence length="138" mass="15430">MFTSLHTPILHPRYCHHPTPSCTQFSPLALPPFHRTLSFLAPPPLLPAAPALSAASAAKPDKSGEQKWVHEGLIMESLPNGMFRVRLDNEDLILGYISGKIRKNYVRILPGDRVKVEVTRYDSSKGRIVYRLRSSTPS</sequence>
<reference key="1">
    <citation type="journal article" date="2001" name="Plant Cell">
        <title>Many parallel losses of infA from chloroplast DNA during angiosperm evolution with multiple independent transfers to the nucleus.</title>
        <authorList>
            <person name="Millen R.S."/>
            <person name="Olmstead R.G."/>
            <person name="Adams K.L."/>
            <person name="Palmer J.D."/>
            <person name="Lao N.T."/>
            <person name="Heggie L."/>
            <person name="Kavanagh T.A."/>
            <person name="Hibberd J.M."/>
            <person name="Gray J.C."/>
            <person name="Morden C.W."/>
            <person name="Calie P.J."/>
            <person name="Jermiin L.S."/>
            <person name="Wolfe K.H."/>
        </authorList>
    </citation>
    <scope>NUCLEOTIDE SEQUENCE [MRNA]</scope>
    <scope>TARGETING TO CHLOROPLASTS</scope>
    <scope>SUBCELLULAR LOCATION</scope>
</reference>
<gene>
    <name type="primary">infA</name>
</gene>
<comment type="function">
    <text evidence="1">One of the essential components for the initiation of protein synthesis. Stabilizes the binding of IF-2 and IF-3 on the 30S subunit to which N-formylmethionyl-tRNA(fMet) subsequently binds. Helps modulate mRNA selection, yielding the 30S pre-initiation complex (PIC). Upon addition of the 50S ribosomal subunit IF-1, IF-2 and IF-3 are released leaving the mature 70S translation initiation complex.</text>
</comment>
<comment type="subunit">
    <text evidence="1">Component of the 30S ribosomal translation pre-initiation complex which assembles on the 30S ribosome in the order IF-2 and IF-3, IF-1 and N-formylmethionyl-tRNA(fMet); mRNA recruitment can occur at any time during PIC assembly.</text>
</comment>
<comment type="subcellular location">
    <subcellularLocation>
        <location evidence="3">Plastid</location>
        <location evidence="3">Chloroplast</location>
    </subcellularLocation>
</comment>
<comment type="similarity">
    <text evidence="4">Belongs to the IF-1 family.</text>
</comment>
<dbReference type="EMBL" id="AF347666">
    <property type="protein sequence ID" value="AAK38870.1"/>
    <property type="molecule type" value="mRNA"/>
</dbReference>
<dbReference type="RefSeq" id="NP_001237201.1">
    <property type="nucleotide sequence ID" value="NM_001250272.2"/>
</dbReference>
<dbReference type="SMR" id="Q94KR7"/>
<dbReference type="FunCoup" id="Q94KR7">
    <property type="interactions" value="1102"/>
</dbReference>
<dbReference type="STRING" id="3847.Q94KR7"/>
<dbReference type="PaxDb" id="3847-GLYMA17G08790.1"/>
<dbReference type="EnsemblPlants" id="KRH03161">
    <property type="protein sequence ID" value="KRH03161"/>
    <property type="gene ID" value="GLYMA_17G080200"/>
</dbReference>
<dbReference type="GeneID" id="547999"/>
<dbReference type="Gramene" id="KRH03161">
    <property type="protein sequence ID" value="KRH03161"/>
    <property type="gene ID" value="GLYMA_17G080200"/>
</dbReference>
<dbReference type="KEGG" id="gmx:547999"/>
<dbReference type="eggNOG" id="ENOG502S8M9">
    <property type="taxonomic scope" value="Eukaryota"/>
</dbReference>
<dbReference type="HOGENOM" id="CLU_120213_1_0_1"/>
<dbReference type="InParanoid" id="Q94KR7"/>
<dbReference type="OMA" id="HEGLIME"/>
<dbReference type="OrthoDB" id="1714886at2759"/>
<dbReference type="Proteomes" id="UP000008827">
    <property type="component" value="Chromosome 17"/>
</dbReference>
<dbReference type="GO" id="GO:0009507">
    <property type="term" value="C:chloroplast"/>
    <property type="evidence" value="ECO:0007669"/>
    <property type="project" value="UniProtKB-SubCell"/>
</dbReference>
<dbReference type="GO" id="GO:0005829">
    <property type="term" value="C:cytosol"/>
    <property type="evidence" value="ECO:0000318"/>
    <property type="project" value="GO_Central"/>
</dbReference>
<dbReference type="GO" id="GO:0043022">
    <property type="term" value="F:ribosome binding"/>
    <property type="evidence" value="ECO:0000318"/>
    <property type="project" value="GO_Central"/>
</dbReference>
<dbReference type="GO" id="GO:0003723">
    <property type="term" value="F:RNA binding"/>
    <property type="evidence" value="ECO:0007669"/>
    <property type="project" value="InterPro"/>
</dbReference>
<dbReference type="GO" id="GO:0003743">
    <property type="term" value="F:translation initiation factor activity"/>
    <property type="evidence" value="ECO:0007669"/>
    <property type="project" value="UniProtKB-KW"/>
</dbReference>
<dbReference type="CDD" id="cd04451">
    <property type="entry name" value="S1_IF1"/>
    <property type="match status" value="1"/>
</dbReference>
<dbReference type="FunFam" id="2.40.50.140:FF:000019">
    <property type="entry name" value="Translation initiation factor IF-1, chloroplastic"/>
    <property type="match status" value="1"/>
</dbReference>
<dbReference type="Gene3D" id="2.40.50.140">
    <property type="entry name" value="Nucleic acid-binding proteins"/>
    <property type="match status" value="1"/>
</dbReference>
<dbReference type="HAMAP" id="MF_00075">
    <property type="entry name" value="IF_1"/>
    <property type="match status" value="1"/>
</dbReference>
<dbReference type="InterPro" id="IPR012340">
    <property type="entry name" value="NA-bd_OB-fold"/>
</dbReference>
<dbReference type="InterPro" id="IPR006196">
    <property type="entry name" value="RNA-binding_domain_S1_IF1"/>
</dbReference>
<dbReference type="InterPro" id="IPR003029">
    <property type="entry name" value="S1_domain"/>
</dbReference>
<dbReference type="InterPro" id="IPR004368">
    <property type="entry name" value="TIF_IF1"/>
</dbReference>
<dbReference type="NCBIfam" id="TIGR00008">
    <property type="entry name" value="infA"/>
    <property type="match status" value="1"/>
</dbReference>
<dbReference type="PANTHER" id="PTHR33370">
    <property type="entry name" value="TRANSLATION INITIATION FACTOR IF-1, CHLOROPLASTIC"/>
    <property type="match status" value="1"/>
</dbReference>
<dbReference type="PANTHER" id="PTHR33370:SF1">
    <property type="entry name" value="TRANSLATION INITIATION FACTOR IF-1, CHLOROPLASTIC"/>
    <property type="match status" value="1"/>
</dbReference>
<dbReference type="Pfam" id="PF01176">
    <property type="entry name" value="eIF-1a"/>
    <property type="match status" value="1"/>
</dbReference>
<dbReference type="SMART" id="SM00316">
    <property type="entry name" value="S1"/>
    <property type="match status" value="1"/>
</dbReference>
<dbReference type="SUPFAM" id="SSF50249">
    <property type="entry name" value="Nucleic acid-binding proteins"/>
    <property type="match status" value="1"/>
</dbReference>
<dbReference type="PROSITE" id="PS50832">
    <property type="entry name" value="S1_IF1_TYPE"/>
    <property type="match status" value="1"/>
</dbReference>
<organism>
    <name type="scientific">Glycine max</name>
    <name type="common">Soybean</name>
    <name type="synonym">Glycine hispida</name>
    <dbReference type="NCBI Taxonomy" id="3847"/>
    <lineage>
        <taxon>Eukaryota</taxon>
        <taxon>Viridiplantae</taxon>
        <taxon>Streptophyta</taxon>
        <taxon>Embryophyta</taxon>
        <taxon>Tracheophyta</taxon>
        <taxon>Spermatophyta</taxon>
        <taxon>Magnoliopsida</taxon>
        <taxon>eudicotyledons</taxon>
        <taxon>Gunneridae</taxon>
        <taxon>Pentapetalae</taxon>
        <taxon>rosids</taxon>
        <taxon>fabids</taxon>
        <taxon>Fabales</taxon>
        <taxon>Fabaceae</taxon>
        <taxon>Papilionoideae</taxon>
        <taxon>50 kb inversion clade</taxon>
        <taxon>NPAAA clade</taxon>
        <taxon>indigoferoid/millettioid clade</taxon>
        <taxon>Phaseoleae</taxon>
        <taxon>Glycine</taxon>
        <taxon>Glycine subgen. Soja</taxon>
    </lineage>
</organism>
<evidence type="ECO:0000250" key="1">
    <source>
        <dbReference type="UniProtKB" id="P69222"/>
    </source>
</evidence>
<evidence type="ECO:0000255" key="2"/>
<evidence type="ECO:0000269" key="3">
    <source>
    </source>
</evidence>
<evidence type="ECO:0000305" key="4"/>